<sequence length="339" mass="37614">MTFLIAVVMLGLIIFVHELGHFLTAKLFKMPVSEFSIGMGPQVFSVDTKKTTYSFRAIPIGGYVNIEGMEVGSEVENGFSSKPAYQRFIVLFAGVFMNFLMAFILLFVTAKISGRIEYDTNAIIGGLVKGGANEQILKVDDKILELDGKKINIWTDISKVTKELQDKEEITALVERNGKEENLTLKLTKDEENNRVVLGISPKYKKIDLSTTESLDFAKNSFNSILIDTVKGFFTIFSGKVSLKEVSGPVGIFKVVGEVSKFGWISIASLCVVLSINIGVLNLLPIPALDGGRIIFVLLELVGIKVNKKWEKKLHKGGMILLLFFILMISVNDVWKLFN</sequence>
<organism>
    <name type="scientific">Fusobacterium nucleatum subsp. nucleatum (strain ATCC 25586 / DSM 15643 / BCRC 10681 / CIP 101130 / JCM 8532 / KCTC 2640 / LMG 13131 / VPI 4355)</name>
    <dbReference type="NCBI Taxonomy" id="190304"/>
    <lineage>
        <taxon>Bacteria</taxon>
        <taxon>Fusobacteriati</taxon>
        <taxon>Fusobacteriota</taxon>
        <taxon>Fusobacteriia</taxon>
        <taxon>Fusobacteriales</taxon>
        <taxon>Fusobacteriaceae</taxon>
        <taxon>Fusobacterium</taxon>
    </lineage>
</organism>
<dbReference type="EC" id="3.4.24.-"/>
<dbReference type="EMBL" id="AE009951">
    <property type="protein sequence ID" value="AAL95518.1"/>
    <property type="molecule type" value="Genomic_DNA"/>
</dbReference>
<dbReference type="RefSeq" id="NP_604219.1">
    <property type="nucleotide sequence ID" value="NC_003454.1"/>
</dbReference>
<dbReference type="RefSeq" id="WP_011017067.1">
    <property type="nucleotide sequence ID" value="NZ_CP028101.1"/>
</dbReference>
<dbReference type="SMR" id="P58819"/>
<dbReference type="FunCoup" id="P58819">
    <property type="interactions" value="351"/>
</dbReference>
<dbReference type="STRING" id="190304.FN1322"/>
<dbReference type="PaxDb" id="190304-FN1322"/>
<dbReference type="EnsemblBacteria" id="AAL95518">
    <property type="protein sequence ID" value="AAL95518"/>
    <property type="gene ID" value="FN1322"/>
</dbReference>
<dbReference type="GeneID" id="79784297"/>
<dbReference type="KEGG" id="fnu:FN1322"/>
<dbReference type="PATRIC" id="fig|190304.8.peg.1886"/>
<dbReference type="eggNOG" id="COG0750">
    <property type="taxonomic scope" value="Bacteria"/>
</dbReference>
<dbReference type="HOGENOM" id="CLU_025778_1_0_0"/>
<dbReference type="InParanoid" id="P58819"/>
<dbReference type="BioCyc" id="FNUC190304:G1FZS-1897-MONOMER"/>
<dbReference type="Proteomes" id="UP000002521">
    <property type="component" value="Chromosome"/>
</dbReference>
<dbReference type="GO" id="GO:0005886">
    <property type="term" value="C:plasma membrane"/>
    <property type="evidence" value="ECO:0007669"/>
    <property type="project" value="UniProtKB-SubCell"/>
</dbReference>
<dbReference type="GO" id="GO:0046872">
    <property type="term" value="F:metal ion binding"/>
    <property type="evidence" value="ECO:0007669"/>
    <property type="project" value="UniProtKB-KW"/>
</dbReference>
<dbReference type="GO" id="GO:0004222">
    <property type="term" value="F:metalloendopeptidase activity"/>
    <property type="evidence" value="ECO:0007669"/>
    <property type="project" value="InterPro"/>
</dbReference>
<dbReference type="GO" id="GO:0006508">
    <property type="term" value="P:proteolysis"/>
    <property type="evidence" value="ECO:0007669"/>
    <property type="project" value="UniProtKB-KW"/>
</dbReference>
<dbReference type="CDD" id="cd06163">
    <property type="entry name" value="S2P-M50_PDZ_RseP-like"/>
    <property type="match status" value="1"/>
</dbReference>
<dbReference type="Gene3D" id="2.30.42.10">
    <property type="match status" value="1"/>
</dbReference>
<dbReference type="InterPro" id="IPR036034">
    <property type="entry name" value="PDZ_sf"/>
</dbReference>
<dbReference type="InterPro" id="IPR004387">
    <property type="entry name" value="Pept_M50_Zn"/>
</dbReference>
<dbReference type="InterPro" id="IPR008915">
    <property type="entry name" value="Peptidase_M50"/>
</dbReference>
<dbReference type="PANTHER" id="PTHR42837:SF2">
    <property type="entry name" value="MEMBRANE METALLOPROTEASE ARASP2, CHLOROPLASTIC-RELATED"/>
    <property type="match status" value="1"/>
</dbReference>
<dbReference type="PANTHER" id="PTHR42837">
    <property type="entry name" value="REGULATOR OF SIGMA-E PROTEASE RSEP"/>
    <property type="match status" value="1"/>
</dbReference>
<dbReference type="Pfam" id="PF02163">
    <property type="entry name" value="Peptidase_M50"/>
    <property type="match status" value="1"/>
</dbReference>
<dbReference type="SUPFAM" id="SSF50156">
    <property type="entry name" value="PDZ domain-like"/>
    <property type="match status" value="1"/>
</dbReference>
<dbReference type="PROSITE" id="PS00142">
    <property type="entry name" value="ZINC_PROTEASE"/>
    <property type="match status" value="1"/>
</dbReference>
<gene>
    <name type="ordered locus">FN1322</name>
</gene>
<accession>P58819</accession>
<name>Y1322_FUSNN</name>
<proteinExistence type="inferred from homology"/>
<comment type="cofactor">
    <cofactor evidence="3">
        <name>Zn(2+)</name>
        <dbReference type="ChEBI" id="CHEBI:29105"/>
    </cofactor>
</comment>
<comment type="subcellular location">
    <subcellularLocation>
        <location evidence="3">Cell membrane</location>
        <topology evidence="3">Multi-pass membrane protein</topology>
    </subcellularLocation>
</comment>
<comment type="similarity">
    <text evidence="3">Belongs to the peptidase M50B family.</text>
</comment>
<keyword id="KW-1003">Cell membrane</keyword>
<keyword id="KW-0378">Hydrolase</keyword>
<keyword id="KW-0472">Membrane</keyword>
<keyword id="KW-0479">Metal-binding</keyword>
<keyword id="KW-0482">Metalloprotease</keyword>
<keyword id="KW-0645">Protease</keyword>
<keyword id="KW-1185">Reference proteome</keyword>
<keyword id="KW-0812">Transmembrane</keyword>
<keyword id="KW-1133">Transmembrane helix</keyword>
<keyword id="KW-0862">Zinc</keyword>
<reference key="1">
    <citation type="journal article" date="2002" name="J. Bacteriol.">
        <title>Genome sequence and analysis of the oral bacterium Fusobacterium nucleatum strain ATCC 25586.</title>
        <authorList>
            <person name="Kapatral V."/>
            <person name="Anderson I."/>
            <person name="Ivanova N."/>
            <person name="Reznik G."/>
            <person name="Los T."/>
            <person name="Lykidis A."/>
            <person name="Bhattacharyya A."/>
            <person name="Bartman A."/>
            <person name="Gardner W."/>
            <person name="Grechkin G."/>
            <person name="Zhu L."/>
            <person name="Vasieva O."/>
            <person name="Chu L."/>
            <person name="Kogan Y."/>
            <person name="Chaga O."/>
            <person name="Goltsman E."/>
            <person name="Bernal A."/>
            <person name="Larsen N."/>
            <person name="D'Souza M."/>
            <person name="Walunas T."/>
            <person name="Pusch G."/>
            <person name="Haselkorn R."/>
            <person name="Fonstein M."/>
            <person name="Kyrpides N.C."/>
            <person name="Overbeek R."/>
        </authorList>
    </citation>
    <scope>NUCLEOTIDE SEQUENCE [LARGE SCALE GENOMIC DNA]</scope>
    <source>
        <strain>ATCC 25586 / DSM 15643 / BCRC 10681 / CIP 101130 / JCM 8532 / KCTC 2640 / LMG 13131 / VPI 4355</strain>
    </source>
</reference>
<evidence type="ECO:0000255" key="1"/>
<evidence type="ECO:0000255" key="2">
    <source>
        <dbReference type="PROSITE-ProRule" id="PRU10095"/>
    </source>
</evidence>
<evidence type="ECO:0000305" key="3"/>
<protein>
    <recommendedName>
        <fullName>Putative zinc metalloprotease FN1322</fullName>
        <ecNumber>3.4.24.-</ecNumber>
    </recommendedName>
</protein>
<feature type="chain" id="PRO_0000088441" description="Putative zinc metalloprotease FN1322">
    <location>
        <begin position="1"/>
        <end position="339"/>
    </location>
</feature>
<feature type="transmembrane region" description="Helical" evidence="1">
    <location>
        <begin position="88"/>
        <end position="110"/>
    </location>
</feature>
<feature type="transmembrane region" description="Helical" evidence="1">
    <location>
        <begin position="262"/>
        <end position="284"/>
    </location>
</feature>
<feature type="transmembrane region" description="Helical" evidence="1">
    <location>
        <begin position="318"/>
        <end position="335"/>
    </location>
</feature>
<feature type="domain" description="PDZ">
    <location>
        <begin position="96"/>
        <end position="179"/>
    </location>
</feature>
<feature type="active site" evidence="2">
    <location>
        <position position="18"/>
    </location>
</feature>
<feature type="binding site" evidence="2">
    <location>
        <position position="17"/>
    </location>
    <ligand>
        <name>Zn(2+)</name>
        <dbReference type="ChEBI" id="CHEBI:29105"/>
        <note>catalytic</note>
    </ligand>
</feature>
<feature type="binding site" evidence="2">
    <location>
        <position position="21"/>
    </location>
    <ligand>
        <name>Zn(2+)</name>
        <dbReference type="ChEBI" id="CHEBI:29105"/>
        <note>catalytic</note>
    </ligand>
</feature>